<protein>
    <recommendedName>
        <fullName evidence="1">Probable inorganic carbon transporter subunit DabA</fullName>
    </recommendedName>
</protein>
<accession>Q13DE9</accession>
<name>DABA_RHOPS</name>
<evidence type="ECO:0000255" key="1">
    <source>
        <dbReference type="HAMAP-Rule" id="MF_01871"/>
    </source>
</evidence>
<reference key="1">
    <citation type="submission" date="2006-03" db="EMBL/GenBank/DDBJ databases">
        <title>Complete sequence of Rhodopseudomonas palustris BisB5.</title>
        <authorList>
            <consortium name="US DOE Joint Genome Institute"/>
            <person name="Copeland A."/>
            <person name="Lucas S."/>
            <person name="Lapidus A."/>
            <person name="Barry K."/>
            <person name="Detter J.C."/>
            <person name="Glavina del Rio T."/>
            <person name="Hammon N."/>
            <person name="Israni S."/>
            <person name="Dalin E."/>
            <person name="Tice H."/>
            <person name="Pitluck S."/>
            <person name="Chain P."/>
            <person name="Malfatti S."/>
            <person name="Shin M."/>
            <person name="Vergez L."/>
            <person name="Schmutz J."/>
            <person name="Larimer F."/>
            <person name="Land M."/>
            <person name="Hauser L."/>
            <person name="Pelletier D.A."/>
            <person name="Kyrpides N."/>
            <person name="Lykidis A."/>
            <person name="Oda Y."/>
            <person name="Harwood C.S."/>
            <person name="Richardson P."/>
        </authorList>
    </citation>
    <scope>NUCLEOTIDE SEQUENCE [LARGE SCALE GENOMIC DNA]</scope>
    <source>
        <strain>BisB5</strain>
    </source>
</reference>
<sequence length="808" mass="86080">MSHPQSPAMADLKRLEAAADRAARAIPPVWPLASSVAVNPFLGQTSESLATAGARLARVAGVAVTMPRRWFHDRISAGVISDEDLLEAWLSAPRDLRPADLAALKAAAASDTPKPRALPSIADLAADVSGVDWPGLIAERFGAWAAGYFDEGQALWAAPHGKGAFAAWQAVTTHDLTPEIAGLRGFAFHVSEAPDSALAVIARAAERLGLKQAAMDSYFHQMLMTLGGWAQYARYALWQAELAGGSDQTITDLLAIRLIWEEALWLRYAPQIAARWASVSAAHGAPIAATPDLVTDAILQEAAERAAQRALANTLAKPAIAAIADRPALQAAFCIDVRSEVFRRALESVNPKVQTLGFAGFFGLATAHRRLASDIDELRLPVLLNPALRSCAGGPDVASRDRSERVKARATRAWGRFKFAAVSSFAFVEATGPIYVGKLVTDALGLRPAPAANDPAPLLSPALDLADRTRAAAAVLRAMSLTDRFARLVVLAGHGANVVNNPHASGLQCGACGGYSGEVNARLLAALLNDTKVRAGLTPDGIAIPADTLFLAALHDTTTDAVTLYADDHPSAAHQHDISQARIWFAAAGKLARGERALRLPRAAHQGSVARRGRDWAETRPEWSLAGCKAFIAAPRTRTTGRSLDGRAFLHDYDWKQDTSFGVLELILTAPVVVASWISLQYYGSTVAPEIFGAGNKLLHNVTGGIGVVEGNGGLLRAGLPWQSVHDGASYAHDPLRLSVCIEAPREAISDVLSRHDNVRALFDNGWLHLFALDEAGRMAWRYAGDLQWSAMSPVEAADPQPRLKVAV</sequence>
<organism>
    <name type="scientific">Rhodopseudomonas palustris (strain BisB5)</name>
    <dbReference type="NCBI Taxonomy" id="316057"/>
    <lineage>
        <taxon>Bacteria</taxon>
        <taxon>Pseudomonadati</taxon>
        <taxon>Pseudomonadota</taxon>
        <taxon>Alphaproteobacteria</taxon>
        <taxon>Hyphomicrobiales</taxon>
        <taxon>Nitrobacteraceae</taxon>
        <taxon>Rhodopseudomonas</taxon>
    </lineage>
</organism>
<dbReference type="EMBL" id="CP000283">
    <property type="protein sequence ID" value="ABE37890.1"/>
    <property type="molecule type" value="Genomic_DNA"/>
</dbReference>
<dbReference type="STRING" id="316057.RPD_0652"/>
<dbReference type="KEGG" id="rpd:RPD_0652"/>
<dbReference type="eggNOG" id="COG3002">
    <property type="taxonomic scope" value="Bacteria"/>
</dbReference>
<dbReference type="HOGENOM" id="CLU_009885_1_0_5"/>
<dbReference type="BioCyc" id="RPAL316057:RPD_RS03340-MONOMER"/>
<dbReference type="Proteomes" id="UP000001818">
    <property type="component" value="Chromosome"/>
</dbReference>
<dbReference type="GO" id="GO:0005886">
    <property type="term" value="C:plasma membrane"/>
    <property type="evidence" value="ECO:0007669"/>
    <property type="project" value="UniProtKB-SubCell"/>
</dbReference>
<dbReference type="GO" id="GO:0008270">
    <property type="term" value="F:zinc ion binding"/>
    <property type="evidence" value="ECO:0007669"/>
    <property type="project" value="UniProtKB-UniRule"/>
</dbReference>
<dbReference type="HAMAP" id="MF_01871">
    <property type="entry name" value="DabA"/>
    <property type="match status" value="1"/>
</dbReference>
<dbReference type="InterPro" id="IPR018752">
    <property type="entry name" value="DabA"/>
</dbReference>
<dbReference type="PANTHER" id="PTHR38344:SF1">
    <property type="entry name" value="INORGANIC CARBON TRANSPORTER SUBUNIT DABA-RELATED"/>
    <property type="match status" value="1"/>
</dbReference>
<dbReference type="PANTHER" id="PTHR38344">
    <property type="entry name" value="UPF0753 PROTEIN AQ_863"/>
    <property type="match status" value="1"/>
</dbReference>
<dbReference type="Pfam" id="PF10070">
    <property type="entry name" value="DabA"/>
    <property type="match status" value="1"/>
</dbReference>
<gene>
    <name evidence="1" type="primary">dabA</name>
    <name type="ordered locus">RPD_0652</name>
</gene>
<proteinExistence type="inferred from homology"/>
<comment type="function">
    <text evidence="1">Part of an energy-coupled inorganic carbon pump.</text>
</comment>
<comment type="cofactor">
    <cofactor evidence="1">
        <name>Zn(2+)</name>
        <dbReference type="ChEBI" id="CHEBI:29105"/>
    </cofactor>
</comment>
<comment type="subunit">
    <text evidence="1">Forms a complex with DabB.</text>
</comment>
<comment type="subcellular location">
    <subcellularLocation>
        <location evidence="1">Cell inner membrane</location>
        <topology evidence="1">Peripheral membrane protein</topology>
    </subcellularLocation>
</comment>
<comment type="similarity">
    <text evidence="1">Belongs to the inorganic carbon transporter (TC 9.A.2) DabA family.</text>
</comment>
<feature type="chain" id="PRO_0000387292" description="Probable inorganic carbon transporter subunit DabA">
    <location>
        <begin position="1"/>
        <end position="808"/>
    </location>
</feature>
<feature type="binding site" evidence="1">
    <location>
        <position position="334"/>
    </location>
    <ligand>
        <name>Zn(2+)</name>
        <dbReference type="ChEBI" id="CHEBI:29105"/>
    </ligand>
</feature>
<feature type="binding site" evidence="1">
    <location>
        <position position="336"/>
    </location>
    <ligand>
        <name>Zn(2+)</name>
        <dbReference type="ChEBI" id="CHEBI:29105"/>
    </ligand>
</feature>
<feature type="binding site" evidence="1">
    <location>
        <position position="494"/>
    </location>
    <ligand>
        <name>Zn(2+)</name>
        <dbReference type="ChEBI" id="CHEBI:29105"/>
    </ligand>
</feature>
<feature type="binding site" evidence="1">
    <location>
        <position position="509"/>
    </location>
    <ligand>
        <name>Zn(2+)</name>
        <dbReference type="ChEBI" id="CHEBI:29105"/>
    </ligand>
</feature>
<keyword id="KW-0997">Cell inner membrane</keyword>
<keyword id="KW-1003">Cell membrane</keyword>
<keyword id="KW-0472">Membrane</keyword>
<keyword id="KW-0479">Metal-binding</keyword>
<keyword id="KW-0813">Transport</keyword>
<keyword id="KW-0862">Zinc</keyword>